<evidence type="ECO:0000255" key="1">
    <source>
        <dbReference type="HAMAP-Rule" id="MF_00494"/>
    </source>
</evidence>
<sequence>MKFFVDTADVKEIRELNDLGLVDGVTTNPSLILKSGRDIIEVTKEICNIVKGPVSAEVAATEYEQMMKEAAVIARIADNICIKLPVTLDGLKACKALTSEGHKVNMTLCFSANQALLAAKAGATFISPFIGRLDDTGINGMELIAEIRTIYDNYDFRTEILAASVRTVNHVKEAALIGADVVTAPPATLKALVKHPLTYKGLETFLADWAKTGQKIA</sequence>
<keyword id="KW-0963">Cytoplasm</keyword>
<keyword id="KW-0570">Pentose shunt</keyword>
<keyword id="KW-0704">Schiff base</keyword>
<keyword id="KW-0808">Transferase</keyword>
<comment type="function">
    <text evidence="1">Transaldolase is important for the balance of metabolites in the pentose-phosphate pathway.</text>
</comment>
<comment type="catalytic activity">
    <reaction evidence="1">
        <text>D-sedoheptulose 7-phosphate + D-glyceraldehyde 3-phosphate = D-erythrose 4-phosphate + beta-D-fructose 6-phosphate</text>
        <dbReference type="Rhea" id="RHEA:17053"/>
        <dbReference type="ChEBI" id="CHEBI:16897"/>
        <dbReference type="ChEBI" id="CHEBI:57483"/>
        <dbReference type="ChEBI" id="CHEBI:57634"/>
        <dbReference type="ChEBI" id="CHEBI:59776"/>
        <dbReference type="EC" id="2.2.1.2"/>
    </reaction>
</comment>
<comment type="pathway">
    <text evidence="1">Carbohydrate degradation; pentose phosphate pathway; D-glyceraldehyde 3-phosphate and beta-D-fructose 6-phosphate from D-ribose 5-phosphate and D-xylulose 5-phosphate (non-oxidative stage): step 2/3.</text>
</comment>
<comment type="subcellular location">
    <subcellularLocation>
        <location evidence="1">Cytoplasm</location>
    </subcellularLocation>
</comment>
<comment type="similarity">
    <text evidence="1">Belongs to the transaldolase family. Type 3B subfamily.</text>
</comment>
<reference key="1">
    <citation type="journal article" date="2002" name="Proc. Natl. Acad. Sci. U.S.A.">
        <title>The genome sequence of the facultative intracellular pathogen Brucella melitensis.</title>
        <authorList>
            <person name="DelVecchio V.G."/>
            <person name="Kapatral V."/>
            <person name="Redkar R.J."/>
            <person name="Patra G."/>
            <person name="Mujer C."/>
            <person name="Los T."/>
            <person name="Ivanova N."/>
            <person name="Anderson I."/>
            <person name="Bhattacharyya A."/>
            <person name="Lykidis A."/>
            <person name="Reznik G."/>
            <person name="Jablonski L."/>
            <person name="Larsen N."/>
            <person name="D'Souza M."/>
            <person name="Bernal A."/>
            <person name="Mazur M."/>
            <person name="Goltsman E."/>
            <person name="Selkov E."/>
            <person name="Elzer P.H."/>
            <person name="Hagius S."/>
            <person name="O'Callaghan D."/>
            <person name="Letesson J.-J."/>
            <person name="Haselkorn R."/>
            <person name="Kyrpides N.C."/>
            <person name="Overbeek R."/>
        </authorList>
    </citation>
    <scope>NUCLEOTIDE SEQUENCE [LARGE SCALE GENOMIC DNA]</scope>
    <source>
        <strain>ATCC 23456 / CCUG 17765 / NCTC 10094 / 16M</strain>
    </source>
</reference>
<name>TAL_BRUME</name>
<proteinExistence type="inferred from homology"/>
<protein>
    <recommendedName>
        <fullName evidence="1">Probable transaldolase</fullName>
        <ecNumber evidence="1">2.2.1.2</ecNumber>
    </recommendedName>
</protein>
<accession>Q8YJ42</accession>
<gene>
    <name evidence="1" type="primary">tal</name>
    <name type="ordered locus">BMEI0244</name>
</gene>
<feature type="chain" id="PRO_0000173660" description="Probable transaldolase">
    <location>
        <begin position="1"/>
        <end position="217"/>
    </location>
</feature>
<feature type="active site" description="Schiff-base intermediate with substrate" evidence="1">
    <location>
        <position position="83"/>
    </location>
</feature>
<dbReference type="EC" id="2.2.1.2" evidence="1"/>
<dbReference type="EMBL" id="AE008917">
    <property type="protein sequence ID" value="AAL51426.1"/>
    <property type="molecule type" value="Genomic_DNA"/>
</dbReference>
<dbReference type="PIR" id="AG3282">
    <property type="entry name" value="AG3282"/>
</dbReference>
<dbReference type="SMR" id="Q8YJ42"/>
<dbReference type="GeneID" id="29593007"/>
<dbReference type="KEGG" id="bme:BMEI0244"/>
<dbReference type="KEGG" id="bmel:DK63_1187"/>
<dbReference type="PATRIC" id="fig|224914.52.peg.1254"/>
<dbReference type="eggNOG" id="COG0176">
    <property type="taxonomic scope" value="Bacteria"/>
</dbReference>
<dbReference type="PhylomeDB" id="Q8YJ42"/>
<dbReference type="UniPathway" id="UPA00115">
    <property type="reaction ID" value="UER00414"/>
</dbReference>
<dbReference type="Proteomes" id="UP000000419">
    <property type="component" value="Chromosome I"/>
</dbReference>
<dbReference type="GO" id="GO:0005737">
    <property type="term" value="C:cytoplasm"/>
    <property type="evidence" value="ECO:0007669"/>
    <property type="project" value="UniProtKB-SubCell"/>
</dbReference>
<dbReference type="GO" id="GO:0016832">
    <property type="term" value="F:aldehyde-lyase activity"/>
    <property type="evidence" value="ECO:0007669"/>
    <property type="project" value="InterPro"/>
</dbReference>
<dbReference type="GO" id="GO:0004801">
    <property type="term" value="F:transaldolase activity"/>
    <property type="evidence" value="ECO:0007669"/>
    <property type="project" value="UniProtKB-UniRule"/>
</dbReference>
<dbReference type="GO" id="GO:0005975">
    <property type="term" value="P:carbohydrate metabolic process"/>
    <property type="evidence" value="ECO:0007669"/>
    <property type="project" value="InterPro"/>
</dbReference>
<dbReference type="GO" id="GO:0006098">
    <property type="term" value="P:pentose-phosphate shunt"/>
    <property type="evidence" value="ECO:0007669"/>
    <property type="project" value="UniProtKB-UniRule"/>
</dbReference>
<dbReference type="CDD" id="cd00956">
    <property type="entry name" value="Transaldolase_FSA"/>
    <property type="match status" value="1"/>
</dbReference>
<dbReference type="FunFam" id="3.20.20.70:FF:000018">
    <property type="entry name" value="Probable transaldolase"/>
    <property type="match status" value="1"/>
</dbReference>
<dbReference type="Gene3D" id="3.20.20.70">
    <property type="entry name" value="Aldolase class I"/>
    <property type="match status" value="1"/>
</dbReference>
<dbReference type="HAMAP" id="MF_00494">
    <property type="entry name" value="Transaldolase_3b"/>
    <property type="match status" value="1"/>
</dbReference>
<dbReference type="InterPro" id="IPR013785">
    <property type="entry name" value="Aldolase_TIM"/>
</dbReference>
<dbReference type="InterPro" id="IPR001585">
    <property type="entry name" value="TAL/FSA"/>
</dbReference>
<dbReference type="InterPro" id="IPR022999">
    <property type="entry name" value="Transaldolase_3B"/>
</dbReference>
<dbReference type="InterPro" id="IPR004731">
    <property type="entry name" value="Transaldolase_3B/F6P_aldolase"/>
</dbReference>
<dbReference type="InterPro" id="IPR018225">
    <property type="entry name" value="Transaldolase_AS"/>
</dbReference>
<dbReference type="InterPro" id="IPR033919">
    <property type="entry name" value="TSA/FSA_arc/bac"/>
</dbReference>
<dbReference type="NCBIfam" id="TIGR00875">
    <property type="entry name" value="fsa_talC_mipB"/>
    <property type="match status" value="1"/>
</dbReference>
<dbReference type="PANTHER" id="PTHR10683:SF40">
    <property type="entry name" value="FRUCTOSE-6-PHOSPHATE ALDOLASE 1-RELATED"/>
    <property type="match status" value="1"/>
</dbReference>
<dbReference type="PANTHER" id="PTHR10683">
    <property type="entry name" value="TRANSALDOLASE"/>
    <property type="match status" value="1"/>
</dbReference>
<dbReference type="Pfam" id="PF00923">
    <property type="entry name" value="TAL_FSA"/>
    <property type="match status" value="1"/>
</dbReference>
<dbReference type="SUPFAM" id="SSF51569">
    <property type="entry name" value="Aldolase"/>
    <property type="match status" value="1"/>
</dbReference>
<dbReference type="PROSITE" id="PS01054">
    <property type="entry name" value="TRANSALDOLASE_1"/>
    <property type="match status" value="1"/>
</dbReference>
<dbReference type="PROSITE" id="PS00958">
    <property type="entry name" value="TRANSALDOLASE_2"/>
    <property type="match status" value="1"/>
</dbReference>
<organism>
    <name type="scientific">Brucella melitensis biotype 1 (strain ATCC 23456 / CCUG 17765 / NCTC 10094 / 16M)</name>
    <dbReference type="NCBI Taxonomy" id="224914"/>
    <lineage>
        <taxon>Bacteria</taxon>
        <taxon>Pseudomonadati</taxon>
        <taxon>Pseudomonadota</taxon>
        <taxon>Alphaproteobacteria</taxon>
        <taxon>Hyphomicrobiales</taxon>
        <taxon>Brucellaceae</taxon>
        <taxon>Brucella/Ochrobactrum group</taxon>
        <taxon>Brucella</taxon>
    </lineage>
</organism>